<comment type="function">
    <text evidence="2">Mediates thiol-dependent retention in the early secretory pathway, forming mixed disulfides with substrate proteins through its conserved CRFS motif. Inhibits the calcium channel activity of ITPR1. May have a role in the control of oxidative protein folding in the endoplasmic reticulum. Required to retain ERO1A and ERO1B in the endoplasmic reticulum.</text>
</comment>
<comment type="subunit">
    <text evidence="2 3">Forms mixed disulfides with both ERO1A and ERO1B and cargo folding intermediates; the interactions with ERO1A and ERO1B result in their retention in the endoplasmic reticulum (By similarity). Directly interacts with ITPR1 in a pH-, redox state- and calcium-dependent manner, but not with ITPR2 or ITPR3 (By similarity). The strength of this interaction inversely correlates with calcium concentration (By similarity).</text>
</comment>
<comment type="subcellular location">
    <subcellularLocation>
        <location evidence="5">Endoplasmic reticulum lumen</location>
    </subcellularLocation>
</comment>
<keyword id="KW-0143">Chaperone</keyword>
<keyword id="KW-1015">Disulfide bond</keyword>
<keyword id="KW-0256">Endoplasmic reticulum</keyword>
<keyword id="KW-1185">Reference proteome</keyword>
<keyword id="KW-0732">Signal</keyword>
<protein>
    <recommendedName>
        <fullName>Endoplasmic reticulum resident protein 44</fullName>
        <shortName>ER protein 44</shortName>
        <shortName>ERp44</shortName>
    </recommendedName>
    <alternativeName>
        <fullName>Thioredoxin domain-containing protein 4</fullName>
    </alternativeName>
</protein>
<reference key="1">
    <citation type="submission" date="2005-08" db="EMBL/GenBank/DDBJ databases">
        <authorList>
            <consortium name="NIH - Mammalian Gene Collection (MGC) project"/>
        </authorList>
    </citation>
    <scope>NUCLEOTIDE SEQUENCE [LARGE SCALE MRNA]</scope>
    <source>
        <strain>Crossbred X Angus</strain>
        <tissue>Ileum</tissue>
    </source>
</reference>
<name>ERP44_BOVIN</name>
<dbReference type="EMBL" id="BC102349">
    <property type="protein sequence ID" value="AAI02350.1"/>
    <property type="molecule type" value="mRNA"/>
</dbReference>
<dbReference type="RefSeq" id="NP_001030204.1">
    <property type="nucleotide sequence ID" value="NM_001035032.2"/>
</dbReference>
<dbReference type="SMR" id="Q3T0L2"/>
<dbReference type="FunCoup" id="Q3T0L2">
    <property type="interactions" value="3660"/>
</dbReference>
<dbReference type="STRING" id="9913.ENSBTAP00000065642"/>
<dbReference type="SwissPalm" id="Q3T0L2"/>
<dbReference type="PaxDb" id="9913-ENSBTAP00000012930"/>
<dbReference type="PeptideAtlas" id="Q3T0L2"/>
<dbReference type="Ensembl" id="ENSBTAT00000012930.7">
    <property type="protein sequence ID" value="ENSBTAP00000012930.5"/>
    <property type="gene ID" value="ENSBTAG00000009804.7"/>
</dbReference>
<dbReference type="GeneID" id="506157"/>
<dbReference type="KEGG" id="bta:506157"/>
<dbReference type="CTD" id="23071"/>
<dbReference type="VEuPathDB" id="HostDB:ENSBTAG00000009804"/>
<dbReference type="VGNC" id="VGNC:28597">
    <property type="gene designation" value="ERP44"/>
</dbReference>
<dbReference type="eggNOG" id="KOG0912">
    <property type="taxonomic scope" value="Eukaryota"/>
</dbReference>
<dbReference type="GeneTree" id="ENSGT00930000151031"/>
<dbReference type="HOGENOM" id="CLU_054449_1_0_1"/>
<dbReference type="InParanoid" id="Q3T0L2"/>
<dbReference type="OMA" id="DWCRFSN"/>
<dbReference type="OrthoDB" id="294696at2759"/>
<dbReference type="TreeFam" id="TF106378"/>
<dbReference type="Reactome" id="R-BTA-6798695">
    <property type="pathway name" value="Neutrophil degranulation"/>
</dbReference>
<dbReference type="Proteomes" id="UP000009136">
    <property type="component" value="Chromosome 8"/>
</dbReference>
<dbReference type="Bgee" id="ENSBTAG00000009804">
    <property type="expression patterns" value="Expressed in oocyte and 107 other cell types or tissues"/>
</dbReference>
<dbReference type="GO" id="GO:0005788">
    <property type="term" value="C:endoplasmic reticulum lumen"/>
    <property type="evidence" value="ECO:0007669"/>
    <property type="project" value="UniProtKB-SubCell"/>
</dbReference>
<dbReference type="GO" id="GO:0005789">
    <property type="term" value="C:endoplasmic reticulum membrane"/>
    <property type="evidence" value="ECO:0000318"/>
    <property type="project" value="GO_Central"/>
</dbReference>
<dbReference type="GO" id="GO:0005793">
    <property type="term" value="C:endoplasmic reticulum-Golgi intermediate compartment"/>
    <property type="evidence" value="ECO:0000318"/>
    <property type="project" value="GO_Central"/>
</dbReference>
<dbReference type="GO" id="GO:0003756">
    <property type="term" value="F:protein disulfide isomerase activity"/>
    <property type="evidence" value="ECO:0000318"/>
    <property type="project" value="GO_Central"/>
</dbReference>
<dbReference type="GO" id="GO:0006457">
    <property type="term" value="P:protein folding"/>
    <property type="evidence" value="ECO:0000318"/>
    <property type="project" value="GO_Central"/>
</dbReference>
<dbReference type="CDD" id="cd02996">
    <property type="entry name" value="PDI_a_ERp44"/>
    <property type="match status" value="1"/>
</dbReference>
<dbReference type="CDD" id="cd03072">
    <property type="entry name" value="PDI_b'_ERp44"/>
    <property type="match status" value="1"/>
</dbReference>
<dbReference type="CDD" id="cd03070">
    <property type="entry name" value="PDI_b_ERp44"/>
    <property type="match status" value="1"/>
</dbReference>
<dbReference type="FunFam" id="3.40.30.10:FF:000051">
    <property type="entry name" value="endoplasmic reticulum resident protein 44"/>
    <property type="match status" value="1"/>
</dbReference>
<dbReference type="FunFam" id="3.40.30.10:FF:000074">
    <property type="entry name" value="endoplasmic reticulum resident protein 44"/>
    <property type="match status" value="1"/>
</dbReference>
<dbReference type="FunFam" id="3.40.30.10:FF:000128">
    <property type="entry name" value="endoplasmic reticulum resident protein 44"/>
    <property type="match status" value="1"/>
</dbReference>
<dbReference type="Gene3D" id="3.40.30.10">
    <property type="entry name" value="Glutaredoxin"/>
    <property type="match status" value="3"/>
</dbReference>
<dbReference type="InterPro" id="IPR052643">
    <property type="entry name" value="ERP44"/>
</dbReference>
<dbReference type="InterPro" id="IPR041862">
    <property type="entry name" value="ERp44_PDI_b"/>
</dbReference>
<dbReference type="InterPro" id="IPR041870">
    <property type="entry name" value="ERp44_PDI_b"/>
</dbReference>
<dbReference type="InterPro" id="IPR036249">
    <property type="entry name" value="Thioredoxin-like_sf"/>
</dbReference>
<dbReference type="InterPro" id="IPR013766">
    <property type="entry name" value="Thioredoxin_domain"/>
</dbReference>
<dbReference type="PANTHER" id="PTHR46295">
    <property type="entry name" value="ENDOPLASMIC RETICULUM RESIDENT PROTEIN 44"/>
    <property type="match status" value="1"/>
</dbReference>
<dbReference type="PANTHER" id="PTHR46295:SF1">
    <property type="entry name" value="ENDOPLASMIC RETICULUM RESIDENT PROTEIN 44"/>
    <property type="match status" value="1"/>
</dbReference>
<dbReference type="Pfam" id="PF00085">
    <property type="entry name" value="Thioredoxin"/>
    <property type="match status" value="1"/>
</dbReference>
<dbReference type="Pfam" id="PF13848">
    <property type="entry name" value="Thioredoxin_6"/>
    <property type="match status" value="1"/>
</dbReference>
<dbReference type="SUPFAM" id="SSF52833">
    <property type="entry name" value="Thioredoxin-like"/>
    <property type="match status" value="3"/>
</dbReference>
<dbReference type="PROSITE" id="PS00014">
    <property type="entry name" value="ER_TARGET"/>
    <property type="match status" value="1"/>
</dbReference>
<dbReference type="PROSITE" id="PS51352">
    <property type="entry name" value="THIOREDOXIN_2"/>
    <property type="match status" value="1"/>
</dbReference>
<organism>
    <name type="scientific">Bos taurus</name>
    <name type="common">Bovine</name>
    <dbReference type="NCBI Taxonomy" id="9913"/>
    <lineage>
        <taxon>Eukaryota</taxon>
        <taxon>Metazoa</taxon>
        <taxon>Chordata</taxon>
        <taxon>Craniata</taxon>
        <taxon>Vertebrata</taxon>
        <taxon>Euteleostomi</taxon>
        <taxon>Mammalia</taxon>
        <taxon>Eutheria</taxon>
        <taxon>Laurasiatheria</taxon>
        <taxon>Artiodactyla</taxon>
        <taxon>Ruminantia</taxon>
        <taxon>Pecora</taxon>
        <taxon>Bovidae</taxon>
        <taxon>Bovinae</taxon>
        <taxon>Bos</taxon>
    </lineage>
</organism>
<accession>Q3T0L2</accession>
<feature type="signal peptide" evidence="1">
    <location>
        <begin position="1"/>
        <end position="29"/>
    </location>
</feature>
<feature type="chain" id="PRO_0000239989" description="Endoplasmic reticulum resident protein 44">
    <location>
        <begin position="30"/>
        <end position="406"/>
    </location>
</feature>
<feature type="domain" description="Thioredoxin" evidence="4">
    <location>
        <begin position="30"/>
        <end position="138"/>
    </location>
</feature>
<feature type="region of interest" description="Interaction with ITPR1" evidence="1">
    <location>
        <begin position="236"/>
        <end position="285"/>
    </location>
</feature>
<feature type="region of interest" description="Disordered" evidence="6">
    <location>
        <begin position="360"/>
        <end position="387"/>
    </location>
</feature>
<feature type="short sequence motif" description="Prevents secretion from ER" evidence="5">
    <location>
        <begin position="403"/>
        <end position="406"/>
    </location>
</feature>
<feature type="compositionally biased region" description="Polar residues" evidence="6">
    <location>
        <begin position="378"/>
        <end position="387"/>
    </location>
</feature>
<feature type="disulfide bond" evidence="1">
    <location>
        <begin position="189"/>
        <end position="241"/>
    </location>
</feature>
<feature type="disulfide bond" evidence="1">
    <location>
        <begin position="301"/>
        <end position="318"/>
    </location>
</feature>
<gene>
    <name type="primary">ERP44</name>
    <name type="synonym">TXNDC4</name>
</gene>
<evidence type="ECO:0000250" key="1"/>
<evidence type="ECO:0000250" key="2">
    <source>
        <dbReference type="UniProtKB" id="Q9BS26"/>
    </source>
</evidence>
<evidence type="ECO:0000250" key="3">
    <source>
        <dbReference type="UniProtKB" id="Q9D1Q6"/>
    </source>
</evidence>
<evidence type="ECO:0000255" key="4">
    <source>
        <dbReference type="PROSITE-ProRule" id="PRU00691"/>
    </source>
</evidence>
<evidence type="ECO:0000255" key="5">
    <source>
        <dbReference type="PROSITE-ProRule" id="PRU10138"/>
    </source>
</evidence>
<evidence type="ECO:0000256" key="6">
    <source>
        <dbReference type="SAM" id="MobiDB-lite"/>
    </source>
</evidence>
<sequence length="406" mass="46836">MIPGIFLSLPDLRCSLLLLVTWVFTPVTAEIISLDTENIDDILNNADVALVNFYADWCRFSQMLHPIFEEASNVIKEEYPNANQVVFARVDCDQHSDIAQRYRISKYPTLKLFRNGMMMKREYRGQRSVKALADYIRQQKSDPIQELHDLAEITTPDRSKRNIIGYFEQKDSENYRVFERVANILHDDCAFLAAFGVVSKPERYSGDNIVYKPPGHSAPDMVYLGSMTNFDGTYNWIQDKCVPLVREITFENGEELTEEGLPFLILFHMKEDTESLEIFQNEVARQLISEKGTINFLHADCDKFRHPLLHIQKTPADCPVIAIDSFRHMYVFGDFRDVLIPGKLKQFVFDLHSGKLHREFHHGPDPTDTAPGEEVQDVASSPPESSFQKLAPSEYRYTLLRDRDEL</sequence>
<proteinExistence type="evidence at transcript level"/>